<feature type="chain" id="PRO_0000362873" description="NAD(P)H-quinone oxidoreductase subunit 3, chloroplastic">
    <location>
        <begin position="1"/>
        <end position="120"/>
    </location>
</feature>
<feature type="transmembrane region" description="Helical" evidence="1">
    <location>
        <begin position="9"/>
        <end position="29"/>
    </location>
</feature>
<feature type="transmembrane region" description="Helical" evidence="1">
    <location>
        <begin position="64"/>
        <end position="84"/>
    </location>
</feature>
<feature type="transmembrane region" description="Helical" evidence="1">
    <location>
        <begin position="88"/>
        <end position="108"/>
    </location>
</feature>
<dbReference type="EC" id="7.1.1.-" evidence="1"/>
<dbReference type="EMBL" id="EF115542">
    <property type="protein sequence ID" value="ABK79501.1"/>
    <property type="molecule type" value="Genomic_DNA"/>
</dbReference>
<dbReference type="RefSeq" id="XP_002457910.1">
    <property type="nucleotide sequence ID" value="XM_002457865.1"/>
</dbReference>
<dbReference type="RefSeq" id="YP_899412.1">
    <property type="nucleotide sequence ID" value="NC_008602.1"/>
</dbReference>
<dbReference type="SMR" id="A1E9S9"/>
<dbReference type="FunCoup" id="A1E9S9">
    <property type="interactions" value="24"/>
</dbReference>
<dbReference type="STRING" id="4558.A1E9S9"/>
<dbReference type="GeneID" id="4549198"/>
<dbReference type="KEGG" id="sbi:4549198"/>
<dbReference type="eggNOG" id="KOG4662">
    <property type="taxonomic scope" value="Eukaryota"/>
</dbReference>
<dbReference type="HOGENOM" id="CLU_119549_1_1_1"/>
<dbReference type="InParanoid" id="A1E9S9"/>
<dbReference type="OrthoDB" id="1852333at2759"/>
<dbReference type="Proteomes" id="UP000000768">
    <property type="component" value="Chloroplast"/>
</dbReference>
<dbReference type="GO" id="GO:0009535">
    <property type="term" value="C:chloroplast thylakoid membrane"/>
    <property type="evidence" value="ECO:0007669"/>
    <property type="project" value="UniProtKB-SubCell"/>
</dbReference>
<dbReference type="GO" id="GO:0030964">
    <property type="term" value="C:NADH dehydrogenase complex"/>
    <property type="evidence" value="ECO:0000318"/>
    <property type="project" value="GO_Central"/>
</dbReference>
<dbReference type="GO" id="GO:0008137">
    <property type="term" value="F:NADH dehydrogenase (ubiquinone) activity"/>
    <property type="evidence" value="ECO:0000318"/>
    <property type="project" value="GO_Central"/>
</dbReference>
<dbReference type="GO" id="GO:0048038">
    <property type="term" value="F:quinone binding"/>
    <property type="evidence" value="ECO:0007669"/>
    <property type="project" value="UniProtKB-KW"/>
</dbReference>
<dbReference type="GO" id="GO:0019684">
    <property type="term" value="P:photosynthesis, light reaction"/>
    <property type="evidence" value="ECO:0007669"/>
    <property type="project" value="UniProtKB-UniRule"/>
</dbReference>
<dbReference type="FunFam" id="1.20.58.1610:FF:000001">
    <property type="entry name" value="NAD(P)H-quinone oxidoreductase subunit 3, chloroplastic"/>
    <property type="match status" value="1"/>
</dbReference>
<dbReference type="Gene3D" id="1.20.58.1610">
    <property type="entry name" value="NADH:ubiquinone/plastoquinone oxidoreductase, chain 3"/>
    <property type="match status" value="1"/>
</dbReference>
<dbReference type="HAMAP" id="MF_01394">
    <property type="entry name" value="NDH1_NuoA"/>
    <property type="match status" value="1"/>
</dbReference>
<dbReference type="InterPro" id="IPR023043">
    <property type="entry name" value="NAD(P)H_OxRDtase_bac/plastid"/>
</dbReference>
<dbReference type="InterPro" id="IPR000440">
    <property type="entry name" value="NADH_UbQ/plastoQ_OxRdtase_su3"/>
</dbReference>
<dbReference type="InterPro" id="IPR038430">
    <property type="entry name" value="NDAH_ubi_oxred_su3_sf"/>
</dbReference>
<dbReference type="PANTHER" id="PTHR11058">
    <property type="entry name" value="NADH-UBIQUINONE OXIDOREDUCTASE CHAIN 3"/>
    <property type="match status" value="1"/>
</dbReference>
<dbReference type="PANTHER" id="PTHR11058:SF9">
    <property type="entry name" value="NADH-UBIQUINONE OXIDOREDUCTASE CHAIN 3"/>
    <property type="match status" value="1"/>
</dbReference>
<dbReference type="Pfam" id="PF00507">
    <property type="entry name" value="Oxidored_q4"/>
    <property type="match status" value="1"/>
</dbReference>
<accession>A1E9S9</accession>
<evidence type="ECO:0000255" key="1">
    <source>
        <dbReference type="HAMAP-Rule" id="MF_01394"/>
    </source>
</evidence>
<organism>
    <name type="scientific">Sorghum bicolor</name>
    <name type="common">Sorghum</name>
    <name type="synonym">Sorghum vulgare</name>
    <dbReference type="NCBI Taxonomy" id="4558"/>
    <lineage>
        <taxon>Eukaryota</taxon>
        <taxon>Viridiplantae</taxon>
        <taxon>Streptophyta</taxon>
        <taxon>Embryophyta</taxon>
        <taxon>Tracheophyta</taxon>
        <taxon>Spermatophyta</taxon>
        <taxon>Magnoliopsida</taxon>
        <taxon>Liliopsida</taxon>
        <taxon>Poales</taxon>
        <taxon>Poaceae</taxon>
        <taxon>PACMAD clade</taxon>
        <taxon>Panicoideae</taxon>
        <taxon>Andropogonodae</taxon>
        <taxon>Andropogoneae</taxon>
        <taxon>Sorghinae</taxon>
        <taxon>Sorghum</taxon>
    </lineage>
</organism>
<geneLocation type="chloroplast"/>
<keyword id="KW-0150">Chloroplast</keyword>
<keyword id="KW-0472">Membrane</keyword>
<keyword id="KW-0520">NAD</keyword>
<keyword id="KW-0521">NADP</keyword>
<keyword id="KW-0934">Plastid</keyword>
<keyword id="KW-0618">Plastoquinone</keyword>
<keyword id="KW-0874">Quinone</keyword>
<keyword id="KW-1185">Reference proteome</keyword>
<keyword id="KW-0793">Thylakoid</keyword>
<keyword id="KW-1278">Translocase</keyword>
<keyword id="KW-0812">Transmembrane</keyword>
<keyword id="KW-1133">Transmembrane helix</keyword>
<keyword id="KW-0813">Transport</keyword>
<reference key="1">
    <citation type="journal article" date="2007" name="Theor. Appl. Genet.">
        <title>Complete chloroplast genome sequences of Hordeum vulgare, Sorghum bicolor and Agrostis stolonifera, and comparative analyses with other grass genomes.</title>
        <authorList>
            <person name="Saski C."/>
            <person name="Lee S.-B."/>
            <person name="Fjellheim S."/>
            <person name="Guda C."/>
            <person name="Jansen R.K."/>
            <person name="Luo H."/>
            <person name="Tomkins J."/>
            <person name="Rognli O.A."/>
            <person name="Daniell H."/>
            <person name="Clarke J.L."/>
        </authorList>
    </citation>
    <scope>NUCLEOTIDE SEQUENCE [LARGE SCALE GENOMIC DNA]</scope>
    <source>
        <strain>cv. BTx623</strain>
    </source>
</reference>
<comment type="function">
    <text evidence="1">NDH shuttles electrons from NAD(P)H:plastoquinone, via FMN and iron-sulfur (Fe-S) centers, to quinones in the photosynthetic chain and possibly in a chloroplast respiratory chain. The immediate electron acceptor for the enzyme in this species is believed to be plastoquinone. Couples the redox reaction to proton translocation, and thus conserves the redox energy in a proton gradient.</text>
</comment>
<comment type="catalytic activity">
    <reaction evidence="1">
        <text>a plastoquinone + NADH + (n+1) H(+)(in) = a plastoquinol + NAD(+) + n H(+)(out)</text>
        <dbReference type="Rhea" id="RHEA:42608"/>
        <dbReference type="Rhea" id="RHEA-COMP:9561"/>
        <dbReference type="Rhea" id="RHEA-COMP:9562"/>
        <dbReference type="ChEBI" id="CHEBI:15378"/>
        <dbReference type="ChEBI" id="CHEBI:17757"/>
        <dbReference type="ChEBI" id="CHEBI:57540"/>
        <dbReference type="ChEBI" id="CHEBI:57945"/>
        <dbReference type="ChEBI" id="CHEBI:62192"/>
    </reaction>
</comment>
<comment type="catalytic activity">
    <reaction evidence="1">
        <text>a plastoquinone + NADPH + (n+1) H(+)(in) = a plastoquinol + NADP(+) + n H(+)(out)</text>
        <dbReference type="Rhea" id="RHEA:42612"/>
        <dbReference type="Rhea" id="RHEA-COMP:9561"/>
        <dbReference type="Rhea" id="RHEA-COMP:9562"/>
        <dbReference type="ChEBI" id="CHEBI:15378"/>
        <dbReference type="ChEBI" id="CHEBI:17757"/>
        <dbReference type="ChEBI" id="CHEBI:57783"/>
        <dbReference type="ChEBI" id="CHEBI:58349"/>
        <dbReference type="ChEBI" id="CHEBI:62192"/>
    </reaction>
</comment>
<comment type="subunit">
    <text evidence="1">NDH is composed of at least 16 different subunits, 5 of which are encoded in the nucleus.</text>
</comment>
<comment type="subcellular location">
    <subcellularLocation>
        <location evidence="1">Plastid</location>
        <location evidence="1">Chloroplast thylakoid membrane</location>
        <topology evidence="1">Multi-pass membrane protein</topology>
    </subcellularLocation>
</comment>
<comment type="similarity">
    <text evidence="1">Belongs to the complex I subunit 3 family.</text>
</comment>
<protein>
    <recommendedName>
        <fullName evidence="1">NAD(P)H-quinone oxidoreductase subunit 3, chloroplastic</fullName>
        <ecNumber evidence="1">7.1.1.-</ecNumber>
    </recommendedName>
    <alternativeName>
        <fullName evidence="1">NAD(P)H dehydrogenase subunit 3</fullName>
    </alternativeName>
    <alternativeName>
        <fullName evidence="1">NADH-plastoquinone oxidoreductase subunit 3</fullName>
    </alternativeName>
</protein>
<sequence length="120" mass="13860">MFLLHEYDIFWTFLIIASLIPILVFWISGLLAPVSEGPEKLSSYESGIEPMGGAWLQFRIRYYMFALVFVVFDVETVFLYPWAMSFDVLGVSVFIEAFIFVLILVVGLVYAWRKGALEWS</sequence>
<proteinExistence type="inferred from homology"/>
<gene>
    <name evidence="1" type="primary">ndhC</name>
</gene>
<name>NU3C_SORBI</name>